<organism>
    <name type="scientific">Pelotomaculum thermopropionicum (strain DSM 13744 / JCM 10971 / SI)</name>
    <dbReference type="NCBI Taxonomy" id="370438"/>
    <lineage>
        <taxon>Bacteria</taxon>
        <taxon>Bacillati</taxon>
        <taxon>Bacillota</taxon>
        <taxon>Clostridia</taxon>
        <taxon>Eubacteriales</taxon>
        <taxon>Desulfotomaculaceae</taxon>
        <taxon>Pelotomaculum</taxon>
    </lineage>
</organism>
<sequence length="59" mass="6570">MAKLKITLVKSLIGRPESQRVTVRTLGLTRTNSSVIKEDTPQIRGMINKVAHLLKVEEA</sequence>
<feature type="chain" id="PRO_1000087257" description="Large ribosomal subunit protein uL30">
    <location>
        <begin position="1"/>
        <end position="59"/>
    </location>
</feature>
<proteinExistence type="inferred from homology"/>
<evidence type="ECO:0000255" key="1">
    <source>
        <dbReference type="HAMAP-Rule" id="MF_01371"/>
    </source>
</evidence>
<evidence type="ECO:0000305" key="2"/>
<name>RL30_PELTS</name>
<accession>A5D5H3</accession>
<dbReference type="EMBL" id="AP009389">
    <property type="protein sequence ID" value="BAF58519.1"/>
    <property type="molecule type" value="Genomic_DNA"/>
</dbReference>
<dbReference type="SMR" id="A5D5H3"/>
<dbReference type="STRING" id="370438.PTH_0337"/>
<dbReference type="KEGG" id="pth:PTH_0337"/>
<dbReference type="eggNOG" id="COG1841">
    <property type="taxonomic scope" value="Bacteria"/>
</dbReference>
<dbReference type="HOGENOM" id="CLU_131047_2_1_9"/>
<dbReference type="Proteomes" id="UP000006556">
    <property type="component" value="Chromosome"/>
</dbReference>
<dbReference type="GO" id="GO:0022625">
    <property type="term" value="C:cytosolic large ribosomal subunit"/>
    <property type="evidence" value="ECO:0007669"/>
    <property type="project" value="TreeGrafter"/>
</dbReference>
<dbReference type="GO" id="GO:0003735">
    <property type="term" value="F:structural constituent of ribosome"/>
    <property type="evidence" value="ECO:0007669"/>
    <property type="project" value="InterPro"/>
</dbReference>
<dbReference type="GO" id="GO:0006412">
    <property type="term" value="P:translation"/>
    <property type="evidence" value="ECO:0007669"/>
    <property type="project" value="UniProtKB-UniRule"/>
</dbReference>
<dbReference type="CDD" id="cd01658">
    <property type="entry name" value="Ribosomal_L30"/>
    <property type="match status" value="1"/>
</dbReference>
<dbReference type="FunFam" id="3.30.1390.20:FF:000001">
    <property type="entry name" value="50S ribosomal protein L30"/>
    <property type="match status" value="1"/>
</dbReference>
<dbReference type="Gene3D" id="3.30.1390.20">
    <property type="entry name" value="Ribosomal protein L30, ferredoxin-like fold domain"/>
    <property type="match status" value="1"/>
</dbReference>
<dbReference type="HAMAP" id="MF_01371_B">
    <property type="entry name" value="Ribosomal_uL30_B"/>
    <property type="match status" value="1"/>
</dbReference>
<dbReference type="InterPro" id="IPR036919">
    <property type="entry name" value="Ribo_uL30_ferredoxin-like_sf"/>
</dbReference>
<dbReference type="InterPro" id="IPR005996">
    <property type="entry name" value="Ribosomal_uL30_bac-type"/>
</dbReference>
<dbReference type="InterPro" id="IPR016082">
    <property type="entry name" value="Ribosomal_uL30_ferredoxin-like"/>
</dbReference>
<dbReference type="NCBIfam" id="TIGR01308">
    <property type="entry name" value="rpmD_bact"/>
    <property type="match status" value="1"/>
</dbReference>
<dbReference type="PANTHER" id="PTHR15892:SF2">
    <property type="entry name" value="LARGE RIBOSOMAL SUBUNIT PROTEIN UL30M"/>
    <property type="match status" value="1"/>
</dbReference>
<dbReference type="PANTHER" id="PTHR15892">
    <property type="entry name" value="MITOCHONDRIAL RIBOSOMAL PROTEIN L30"/>
    <property type="match status" value="1"/>
</dbReference>
<dbReference type="Pfam" id="PF00327">
    <property type="entry name" value="Ribosomal_L30"/>
    <property type="match status" value="1"/>
</dbReference>
<dbReference type="PIRSF" id="PIRSF002211">
    <property type="entry name" value="Ribosomal_L30_bac-type"/>
    <property type="match status" value="1"/>
</dbReference>
<dbReference type="SUPFAM" id="SSF55129">
    <property type="entry name" value="Ribosomal protein L30p/L7e"/>
    <property type="match status" value="1"/>
</dbReference>
<reference key="1">
    <citation type="journal article" date="2008" name="Genome Res.">
        <title>The genome of Pelotomaculum thermopropionicum reveals niche-associated evolution in anaerobic microbiota.</title>
        <authorList>
            <person name="Kosaka T."/>
            <person name="Kato S."/>
            <person name="Shimoyama T."/>
            <person name="Ishii S."/>
            <person name="Abe T."/>
            <person name="Watanabe K."/>
        </authorList>
    </citation>
    <scope>NUCLEOTIDE SEQUENCE [LARGE SCALE GENOMIC DNA]</scope>
    <source>
        <strain>DSM 13744 / JCM 10971 / SI</strain>
    </source>
</reference>
<protein>
    <recommendedName>
        <fullName evidence="1">Large ribosomal subunit protein uL30</fullName>
    </recommendedName>
    <alternativeName>
        <fullName evidence="2">50S ribosomal protein L30</fullName>
    </alternativeName>
</protein>
<comment type="subunit">
    <text evidence="1">Part of the 50S ribosomal subunit.</text>
</comment>
<comment type="similarity">
    <text evidence="1">Belongs to the universal ribosomal protein uL30 family.</text>
</comment>
<keyword id="KW-1185">Reference proteome</keyword>
<keyword id="KW-0687">Ribonucleoprotein</keyword>
<keyword id="KW-0689">Ribosomal protein</keyword>
<gene>
    <name evidence="1" type="primary">rpmD</name>
    <name type="ordered locus">PTH_0337</name>
</gene>